<protein>
    <recommendedName>
        <fullName evidence="10">NADPH dehydrogenase 2</fullName>
        <ecNumber evidence="6">1.6.99.1</ecNumber>
    </recommendedName>
    <alternativeName>
        <fullName evidence="8">Old yellow enzyme 2</fullName>
    </alternativeName>
</protein>
<gene>
    <name evidence="8" type="primary">OYE2</name>
    <name type="ordered locus">YHR179W</name>
</gene>
<keyword id="KW-0002">3D-structure</keyword>
<keyword id="KW-0963">Cytoplasm</keyword>
<keyword id="KW-0903">Direct protein sequencing</keyword>
<keyword id="KW-0285">Flavoprotein</keyword>
<keyword id="KW-0288">FMN</keyword>
<keyword id="KW-0496">Mitochondrion</keyword>
<keyword id="KW-0521">NADP</keyword>
<keyword id="KW-0539">Nucleus</keyword>
<keyword id="KW-0560">Oxidoreductase</keyword>
<keyword id="KW-0597">Phosphoprotein</keyword>
<keyword id="KW-1185">Reference proteome</keyword>
<name>OYE2_YEAST</name>
<feature type="initiator methionine" description="Removed" evidence="7">
    <location>
        <position position="1"/>
    </location>
</feature>
<feature type="chain" id="PRO_0000194474" description="NADPH dehydrogenase 2">
    <location>
        <begin position="2"/>
        <end position="400"/>
    </location>
</feature>
<feature type="active site" description="Proton donor" evidence="1">
    <location>
        <position position="197"/>
    </location>
</feature>
<feature type="binding site" evidence="1">
    <location>
        <position position="38"/>
    </location>
    <ligand>
        <name>FMN</name>
        <dbReference type="ChEBI" id="CHEBI:58210"/>
    </ligand>
</feature>
<feature type="binding site" evidence="1">
    <location>
        <position position="115"/>
    </location>
    <ligand>
        <name>FMN</name>
        <dbReference type="ChEBI" id="CHEBI:58210"/>
    </ligand>
</feature>
<feature type="binding site" evidence="1">
    <location>
        <position position="192"/>
    </location>
    <ligand>
        <name>substrate</name>
    </ligand>
</feature>
<feature type="binding site" evidence="1">
    <location>
        <position position="195"/>
    </location>
    <ligand>
        <name>substrate</name>
    </ligand>
</feature>
<feature type="binding site" evidence="1">
    <location>
        <position position="244"/>
    </location>
    <ligand>
        <name>FMN</name>
        <dbReference type="ChEBI" id="CHEBI:58210"/>
    </ligand>
</feature>
<feature type="binding site" evidence="1">
    <location>
        <position position="349"/>
    </location>
    <ligand>
        <name>FMN</name>
        <dbReference type="ChEBI" id="CHEBI:58210"/>
    </ligand>
</feature>
<feature type="binding site" evidence="1">
    <location>
        <position position="376"/>
    </location>
    <ligand>
        <name>substrate</name>
    </ligand>
</feature>
<feature type="modified residue" description="Phosphoserine" evidence="12 13">
    <location>
        <position position="353"/>
    </location>
</feature>
<feature type="modified residue" description="Phosphoserine" evidence="12">
    <location>
        <position position="379"/>
    </location>
</feature>
<feature type="sequence conflict" description="In Ref. 4; AAS56612." evidence="9" ref="4">
    <original>W</original>
    <variation>R</variation>
    <location>
        <position position="90"/>
    </location>
</feature>
<feature type="helix" evidence="14">
    <location>
        <begin position="16"/>
        <end position="18"/>
    </location>
</feature>
<feature type="strand" evidence="14">
    <location>
        <begin position="21"/>
        <end position="23"/>
    </location>
</feature>
<feature type="strand" evidence="14">
    <location>
        <begin position="26"/>
        <end position="29"/>
    </location>
</feature>
<feature type="strand" evidence="14">
    <location>
        <begin position="32"/>
        <end position="34"/>
    </location>
</feature>
<feature type="turn" evidence="14">
    <location>
        <begin position="44"/>
        <end position="47"/>
    </location>
</feature>
<feature type="turn" evidence="14">
    <location>
        <begin position="51"/>
        <end position="53"/>
    </location>
</feature>
<feature type="helix" evidence="14">
    <location>
        <begin position="54"/>
        <end position="61"/>
    </location>
</feature>
<feature type="strand" evidence="14">
    <location>
        <begin position="68"/>
        <end position="77"/>
    </location>
</feature>
<feature type="helix" evidence="14">
    <location>
        <begin position="78"/>
        <end position="80"/>
    </location>
</feature>
<feature type="strand" evidence="14">
    <location>
        <begin position="88"/>
        <end position="91"/>
    </location>
</feature>
<feature type="helix" evidence="14">
    <location>
        <begin position="92"/>
        <end position="107"/>
    </location>
</feature>
<feature type="strand" evidence="14">
    <location>
        <begin position="111"/>
        <end position="116"/>
    </location>
</feature>
<feature type="helix" evidence="14">
    <location>
        <begin position="120"/>
        <end position="122"/>
    </location>
</feature>
<feature type="helix" evidence="14">
    <location>
        <begin position="125"/>
        <end position="130"/>
    </location>
</feature>
<feature type="strand" evidence="14">
    <location>
        <begin position="136"/>
        <end position="138"/>
    </location>
</feature>
<feature type="helix" evidence="14">
    <location>
        <begin position="146"/>
        <end position="154"/>
    </location>
</feature>
<feature type="helix" evidence="14">
    <location>
        <begin position="164"/>
        <end position="183"/>
    </location>
</feature>
<feature type="strand" evidence="14">
    <location>
        <begin position="187"/>
        <end position="192"/>
    </location>
</feature>
<feature type="helix" evidence="14">
    <location>
        <begin position="198"/>
        <end position="203"/>
    </location>
</feature>
<feature type="turn" evidence="14">
    <location>
        <begin position="205"/>
        <end position="207"/>
    </location>
</feature>
<feature type="strand" evidence="14">
    <location>
        <begin position="215"/>
        <end position="217"/>
    </location>
</feature>
<feature type="helix" evidence="14">
    <location>
        <begin position="218"/>
        <end position="221"/>
    </location>
</feature>
<feature type="helix" evidence="14">
    <location>
        <begin position="223"/>
        <end position="236"/>
    </location>
</feature>
<feature type="helix" evidence="14">
    <location>
        <begin position="238"/>
        <end position="240"/>
    </location>
</feature>
<feature type="strand" evidence="14">
    <location>
        <begin position="241"/>
        <end position="245"/>
    </location>
</feature>
<feature type="helix" evidence="14">
    <location>
        <begin position="256"/>
        <end position="258"/>
    </location>
</feature>
<feature type="helix" evidence="14">
    <location>
        <begin position="262"/>
        <end position="278"/>
    </location>
</feature>
<feature type="strand" evidence="14">
    <location>
        <begin position="284"/>
        <end position="289"/>
    </location>
</feature>
<feature type="helix" evidence="14">
    <location>
        <begin position="311"/>
        <end position="315"/>
    </location>
</feature>
<feature type="strand" evidence="14">
    <location>
        <begin position="321"/>
        <end position="326"/>
    </location>
</feature>
<feature type="helix" evidence="14">
    <location>
        <begin position="331"/>
        <end position="337"/>
    </location>
</feature>
<feature type="strand" evidence="14">
    <location>
        <begin position="343"/>
        <end position="346"/>
    </location>
</feature>
<feature type="helix" evidence="14">
    <location>
        <begin position="349"/>
        <end position="353"/>
    </location>
</feature>
<feature type="helix" evidence="14">
    <location>
        <begin position="357"/>
        <end position="363"/>
    </location>
</feature>
<feature type="helix" evidence="14">
    <location>
        <begin position="372"/>
        <end position="374"/>
    </location>
</feature>
<feature type="strand" evidence="14">
    <location>
        <begin position="375"/>
        <end position="380"/>
    </location>
</feature>
<feature type="turn" evidence="14">
    <location>
        <begin position="381"/>
        <end position="383"/>
    </location>
</feature>
<feature type="helix" evidence="14">
    <location>
        <begin position="389"/>
        <end position="393"/>
    </location>
</feature>
<feature type="turn" evidence="14">
    <location>
        <begin position="394"/>
        <end position="396"/>
    </location>
</feature>
<proteinExistence type="evidence at protein level"/>
<sequence>MPFVKDFKPQALGDTNLFKPIKIGNNELLHRAVIPPLTRMRAQHPGNIPNRDWAVEYYAQRAQRPGTLIITEGTFPSPQSGGYDNAPGIWSEEQIKEWTKIFKAIHENKSFAWVQLWVLGWAAFPDTLARDGLRYDSASDNVYMNAEQEEKAKKANNPQHSITKDEIKQYVKEYVQAAKNSIAAGADGVEIHSANGYLLNQFLDPHSNNRTDEYGGSIENRARFTLEVVDAVVDAIGPEKVGLRLSPYGVFNSMSGGAETGIVAQYAYVLGELERRAKAGKRLAFVHLVEPRVTNPFLTEGEGEYNGGSNKFAYSIWKGPIIRAGNFALHPEVVREEVKDPRTLIGYGRFFISNPDLVDRLEKGLPLNKYDRDTFYKMSAEGYIDYPTYEEALKLGWDKN</sequence>
<comment type="function">
    <text evidence="1 5">Flavin-dependent enoate reductase that catalyzes the chemo- and stereoslective hydrogenation of electron-poor alkenes. The enzyme is reduced by NADPH, and oxygen, quinones, and alpha,beta-unsaturated aldehydes and ketones can act as electron acceptors to complete catalytic turnover. The physiological oxidant remains elusive (By similarity). Has an antioxidant activity, reducing reactive oxygen species (ROS) levels when overexpressed. Formation of OYE2-OYE3 heterodimers contribute to the induction of programmed cell death upon oxidative stress (PubMed:17897954).</text>
</comment>
<comment type="catalytic activity">
    <reaction evidence="6">
        <text>A + NADPH + H(+) = AH2 + NADP(+)</text>
        <dbReference type="Rhea" id="RHEA:13149"/>
        <dbReference type="ChEBI" id="CHEBI:13193"/>
        <dbReference type="ChEBI" id="CHEBI:15378"/>
        <dbReference type="ChEBI" id="CHEBI:17499"/>
        <dbReference type="ChEBI" id="CHEBI:57783"/>
        <dbReference type="ChEBI" id="CHEBI:58349"/>
        <dbReference type="EC" id="1.6.99.1"/>
    </reaction>
</comment>
<comment type="cofactor">
    <cofactor evidence="11">
        <name>FMN</name>
        <dbReference type="ChEBI" id="CHEBI:58210"/>
    </cofactor>
</comment>
<comment type="biophysicochemical properties">
    <kinetics>
        <KM evidence="6">1 uM for cyclohexenone</KM>
        <KM evidence="6">1.65 mM for oxygen</KM>
    </kinetics>
</comment>
<comment type="subunit">
    <text evidence="7">Homodimer or heterodimer with OYE3.</text>
</comment>
<comment type="interaction">
    <interactant intactId="EBI-12729">
        <id>Q03558</id>
    </interactant>
    <interactant intactId="EBI-12734">
        <id>P41816</id>
        <label>OYE3</label>
    </interactant>
    <organismsDiffer>false</organismsDiffer>
    <experiments>3</experiments>
</comment>
<comment type="subcellular location">
    <subcellularLocation>
        <location evidence="2">Cytoplasm</location>
    </subcellularLocation>
    <subcellularLocation>
        <location evidence="2">Nucleus</location>
    </subcellularLocation>
    <subcellularLocation>
        <location evidence="4 5">Mitochondrion</location>
    </subcellularLocation>
</comment>
<comment type="mass spectrometry"/>
<comment type="mass spectrometry"/>
<comment type="miscellaneous">
    <text evidence="3">Present with 15100 molecules/cell in log phase SD medium.</text>
</comment>
<comment type="similarity">
    <text evidence="9">Belongs to the NADH:flavin oxidoreductase/NADH oxidase family.</text>
</comment>
<accession>Q03558</accession>
<accession>D3DLC8</accession>
<accession>E9P8V8</accession>
<organism>
    <name type="scientific">Saccharomyces cerevisiae (strain ATCC 204508 / S288c)</name>
    <name type="common">Baker's yeast</name>
    <dbReference type="NCBI Taxonomy" id="559292"/>
    <lineage>
        <taxon>Eukaryota</taxon>
        <taxon>Fungi</taxon>
        <taxon>Dikarya</taxon>
        <taxon>Ascomycota</taxon>
        <taxon>Saccharomycotina</taxon>
        <taxon>Saccharomycetes</taxon>
        <taxon>Saccharomycetales</taxon>
        <taxon>Saccharomycetaceae</taxon>
        <taxon>Saccharomyces</taxon>
    </lineage>
</organism>
<reference key="1">
    <citation type="journal article" date="1993" name="J. Biol. Chem.">
        <title>Old Yellow Enzyme. The discovery of multiple isozymes and a family of related proteins.</title>
        <authorList>
            <person name="Stott K."/>
            <person name="Saito K."/>
            <person name="Thiels D.J."/>
            <person name="Massey V."/>
        </authorList>
    </citation>
    <scope>NUCLEOTIDE SEQUENCE [GENOMIC DNA]</scope>
    <scope>PROTEIN SEQUENCE OF 2-37</scope>
    <scope>CLEAVAGE OF INITIATOR METHIONINE</scope>
    <scope>MASS SPECTROMETRY</scope>
    <scope>SUBUNIT</scope>
    <scope>COFACTOR</scope>
</reference>
<reference key="2">
    <citation type="journal article" date="1994" name="Science">
        <title>Complete nucleotide sequence of Saccharomyces cerevisiae chromosome VIII.</title>
        <authorList>
            <person name="Johnston M."/>
            <person name="Andrews S."/>
            <person name="Brinkman R."/>
            <person name="Cooper J."/>
            <person name="Ding H."/>
            <person name="Dover J."/>
            <person name="Du Z."/>
            <person name="Favello A."/>
            <person name="Fulton L."/>
            <person name="Gattung S."/>
            <person name="Geisel C."/>
            <person name="Kirsten J."/>
            <person name="Kucaba T."/>
            <person name="Hillier L.W."/>
            <person name="Jier M."/>
            <person name="Johnston L."/>
            <person name="Langston Y."/>
            <person name="Latreille P."/>
            <person name="Louis E.J."/>
            <person name="Macri C."/>
            <person name="Mardis E."/>
            <person name="Menezes S."/>
            <person name="Mouser L."/>
            <person name="Nhan M."/>
            <person name="Rifkin L."/>
            <person name="Riles L."/>
            <person name="St Peter H."/>
            <person name="Trevaskis E."/>
            <person name="Vaughan K."/>
            <person name="Vignati D."/>
            <person name="Wilcox L."/>
            <person name="Wohldman P."/>
            <person name="Waterston R."/>
            <person name="Wilson R."/>
            <person name="Vaudin M."/>
        </authorList>
    </citation>
    <scope>NUCLEOTIDE SEQUENCE [LARGE SCALE GENOMIC DNA]</scope>
    <source>
        <strain>ATCC 204508 / S288c</strain>
    </source>
</reference>
<reference key="3">
    <citation type="journal article" date="2014" name="G3 (Bethesda)">
        <title>The reference genome sequence of Saccharomyces cerevisiae: Then and now.</title>
        <authorList>
            <person name="Engel S.R."/>
            <person name="Dietrich F.S."/>
            <person name="Fisk D.G."/>
            <person name="Binkley G."/>
            <person name="Balakrishnan R."/>
            <person name="Costanzo M.C."/>
            <person name="Dwight S.S."/>
            <person name="Hitz B.C."/>
            <person name="Karra K."/>
            <person name="Nash R.S."/>
            <person name="Weng S."/>
            <person name="Wong E.D."/>
            <person name="Lloyd P."/>
            <person name="Skrzypek M.S."/>
            <person name="Miyasato S.R."/>
            <person name="Simison M."/>
            <person name="Cherry J.M."/>
        </authorList>
    </citation>
    <scope>GENOME REANNOTATION</scope>
    <source>
        <strain>ATCC 204508 / S288c</strain>
    </source>
</reference>
<reference key="4">
    <citation type="journal article" date="2007" name="Genome Res.">
        <title>Approaching a complete repository of sequence-verified protein-encoding clones for Saccharomyces cerevisiae.</title>
        <authorList>
            <person name="Hu Y."/>
            <person name="Rolfs A."/>
            <person name="Bhullar B."/>
            <person name="Murthy T.V.S."/>
            <person name="Zhu C."/>
            <person name="Berger M.F."/>
            <person name="Camargo A.A."/>
            <person name="Kelley F."/>
            <person name="McCarron S."/>
            <person name="Jepson D."/>
            <person name="Richardson A."/>
            <person name="Raphael J."/>
            <person name="Moreira D."/>
            <person name="Taycher E."/>
            <person name="Zuo D."/>
            <person name="Mohr S."/>
            <person name="Kane M.F."/>
            <person name="Williamson J."/>
            <person name="Simpson A.J.G."/>
            <person name="Bulyk M.L."/>
            <person name="Harlow E."/>
            <person name="Marsischky G."/>
            <person name="Kolodner R.D."/>
            <person name="LaBaer J."/>
        </authorList>
    </citation>
    <scope>NUCLEOTIDE SEQUENCE [GENOMIC DNA]</scope>
    <source>
        <strain>ATCC 204508 / S288c</strain>
    </source>
</reference>
<reference key="5">
    <citation type="journal article" date="1995" name="J. Biol. Chem.">
        <title>A new old yellow enzyme of Saccharomyces cerevisiae.</title>
        <authorList>
            <person name="Niino Y.S."/>
            <person name="Chakraborty S."/>
            <person name="Brown B.J."/>
            <person name="Massey V."/>
        </authorList>
    </citation>
    <scope>CATALYTIC ACTIVITY</scope>
    <scope>BIOPHYSICOCHEMICAL PROPERTIES</scope>
    <scope>MASS SPECTROMETRY</scope>
    <source>
        <strain>RZ49-1</strain>
    </source>
</reference>
<reference key="6">
    <citation type="journal article" date="2003" name="Nature">
        <title>Global analysis of protein localization in budding yeast.</title>
        <authorList>
            <person name="Huh W.-K."/>
            <person name="Falvo J.V."/>
            <person name="Gerke L.C."/>
            <person name="Carroll A.S."/>
            <person name="Howson R.W."/>
            <person name="Weissman J.S."/>
            <person name="O'Shea E.K."/>
        </authorList>
    </citation>
    <scope>SUBCELLULAR LOCATION [LARGE SCALE ANALYSIS]</scope>
</reference>
<reference key="7">
    <citation type="journal article" date="2003" name="Nature">
        <title>Global analysis of protein expression in yeast.</title>
        <authorList>
            <person name="Ghaemmaghami S."/>
            <person name="Huh W.-K."/>
            <person name="Bower K."/>
            <person name="Howson R.W."/>
            <person name="Belle A."/>
            <person name="Dephoure N."/>
            <person name="O'Shea E.K."/>
            <person name="Weissman J.S."/>
        </authorList>
    </citation>
    <scope>LEVEL OF PROTEIN EXPRESSION [LARGE SCALE ANALYSIS]</scope>
</reference>
<reference key="8">
    <citation type="journal article" date="2003" name="Proc. Natl. Acad. Sci. U.S.A.">
        <title>The proteome of Saccharomyces cerevisiae mitochondria.</title>
        <authorList>
            <person name="Sickmann A."/>
            <person name="Reinders J."/>
            <person name="Wagner Y."/>
            <person name="Joppich C."/>
            <person name="Zahedi R.P."/>
            <person name="Meyer H.E."/>
            <person name="Schoenfisch B."/>
            <person name="Perschil I."/>
            <person name="Chacinska A."/>
            <person name="Guiard B."/>
            <person name="Rehling P."/>
            <person name="Pfanner N."/>
            <person name="Meisinger C."/>
        </authorList>
    </citation>
    <scope>SUBCELLULAR LOCATION [LARGE SCALE ANALYSIS]</scope>
    <scope>MASS SPECTROMETRY</scope>
</reference>
<reference key="9">
    <citation type="journal article" date="2007" name="J. Biol. Chem.">
        <title>Old yellow enzymes, highly homologous FMN oxidoreductases with modulating roles in oxidative stress and programmed cell death in yeast.</title>
        <authorList>
            <person name="Odat O."/>
            <person name="Matta S."/>
            <person name="Khalil H."/>
            <person name="Kampranis S.C."/>
            <person name="Pfau R."/>
            <person name="Tsichlis P.N."/>
            <person name="Makris A.M."/>
        </authorList>
    </citation>
    <scope>SUBCELLULAR LOCATION</scope>
</reference>
<reference key="10">
    <citation type="journal article" date="2008" name="Mol. Cell. Proteomics">
        <title>A multidimensional chromatography technology for in-depth phosphoproteome analysis.</title>
        <authorList>
            <person name="Albuquerque C.P."/>
            <person name="Smolka M.B."/>
            <person name="Payne S.H."/>
            <person name="Bafna V."/>
            <person name="Eng J."/>
            <person name="Zhou H."/>
        </authorList>
    </citation>
    <scope>PHOSPHORYLATION [LARGE SCALE ANALYSIS] AT SER-353 AND SER-379</scope>
    <scope>IDENTIFICATION BY MASS SPECTROMETRY [LARGE SCALE ANALYSIS]</scope>
</reference>
<reference key="11">
    <citation type="journal article" date="2009" name="Science">
        <title>Global analysis of Cdk1 substrate phosphorylation sites provides insights into evolution.</title>
        <authorList>
            <person name="Holt L.J."/>
            <person name="Tuch B.B."/>
            <person name="Villen J."/>
            <person name="Johnson A.D."/>
            <person name="Gygi S.P."/>
            <person name="Morgan D.O."/>
        </authorList>
    </citation>
    <scope>PHOSPHORYLATION [LARGE SCALE ANALYSIS] AT SER-353</scope>
    <scope>IDENTIFICATION BY MASS SPECTROMETRY [LARGE SCALE ANALYSIS]</scope>
</reference>
<evidence type="ECO:0000250" key="1">
    <source>
        <dbReference type="UniProtKB" id="Q02899"/>
    </source>
</evidence>
<evidence type="ECO:0000269" key="2">
    <source>
    </source>
</evidence>
<evidence type="ECO:0000269" key="3">
    <source>
    </source>
</evidence>
<evidence type="ECO:0000269" key="4">
    <source>
    </source>
</evidence>
<evidence type="ECO:0000269" key="5">
    <source>
    </source>
</evidence>
<evidence type="ECO:0000269" key="6">
    <source>
    </source>
</evidence>
<evidence type="ECO:0000269" key="7">
    <source>
    </source>
</evidence>
<evidence type="ECO:0000303" key="8">
    <source>
    </source>
</evidence>
<evidence type="ECO:0000305" key="9"/>
<evidence type="ECO:0000305" key="10">
    <source>
    </source>
</evidence>
<evidence type="ECO:0000305" key="11">
    <source>
    </source>
</evidence>
<evidence type="ECO:0007744" key="12">
    <source>
    </source>
</evidence>
<evidence type="ECO:0007744" key="13">
    <source>
    </source>
</evidence>
<evidence type="ECO:0007829" key="14">
    <source>
        <dbReference type="PDB" id="7BN7"/>
    </source>
</evidence>
<dbReference type="EC" id="1.6.99.1" evidence="6"/>
<dbReference type="EMBL" id="L06124">
    <property type="protein sequence ID" value="AAA83386.1"/>
    <property type="molecule type" value="Genomic_DNA"/>
</dbReference>
<dbReference type="EMBL" id="U00027">
    <property type="protein sequence ID" value="AAB68024.1"/>
    <property type="molecule type" value="Genomic_DNA"/>
</dbReference>
<dbReference type="EMBL" id="AY558286">
    <property type="protein sequence ID" value="AAS56612.1"/>
    <property type="molecule type" value="Genomic_DNA"/>
</dbReference>
<dbReference type="EMBL" id="BK006934">
    <property type="protein sequence ID" value="DAA06872.1"/>
    <property type="molecule type" value="Genomic_DNA"/>
</dbReference>
<dbReference type="PIR" id="A46009">
    <property type="entry name" value="A46009"/>
</dbReference>
<dbReference type="RefSeq" id="NP_012049.1">
    <property type="nucleotide sequence ID" value="NM_001179310.1"/>
</dbReference>
<dbReference type="PDB" id="7BN7">
    <property type="method" value="X-ray"/>
    <property type="resolution" value="2.45 A"/>
    <property type="chains" value="A/B/C/D=1-400"/>
</dbReference>
<dbReference type="PDB" id="9FH7">
    <property type="method" value="X-ray"/>
    <property type="resolution" value="1.53 A"/>
    <property type="chains" value="A/B=1-400"/>
</dbReference>
<dbReference type="PDBsum" id="7BN7"/>
<dbReference type="PDBsum" id="9FH7"/>
<dbReference type="SMR" id="Q03558"/>
<dbReference type="BioGRID" id="36612">
    <property type="interactions" value="143"/>
</dbReference>
<dbReference type="DIP" id="DIP-213N"/>
<dbReference type="FunCoup" id="Q03558">
    <property type="interactions" value="1070"/>
</dbReference>
<dbReference type="IntAct" id="Q03558">
    <property type="interactions" value="41"/>
</dbReference>
<dbReference type="MINT" id="Q03558"/>
<dbReference type="STRING" id="4932.YHR179W"/>
<dbReference type="iPTMnet" id="Q03558"/>
<dbReference type="PaxDb" id="4932-YHR179W"/>
<dbReference type="PeptideAtlas" id="Q03558"/>
<dbReference type="TopDownProteomics" id="Q03558"/>
<dbReference type="EnsemblFungi" id="YHR179W_mRNA">
    <property type="protein sequence ID" value="YHR179W"/>
    <property type="gene ID" value="YHR179W"/>
</dbReference>
<dbReference type="GeneID" id="856584"/>
<dbReference type="KEGG" id="sce:YHR179W"/>
<dbReference type="AGR" id="SGD:S000001222"/>
<dbReference type="SGD" id="S000001222">
    <property type="gene designation" value="OYE2"/>
</dbReference>
<dbReference type="VEuPathDB" id="FungiDB:YHR179W"/>
<dbReference type="eggNOG" id="KOG0134">
    <property type="taxonomic scope" value="Eukaryota"/>
</dbReference>
<dbReference type="GeneTree" id="ENSGT00940000176560"/>
<dbReference type="HOGENOM" id="CLU_012153_0_0_1"/>
<dbReference type="InParanoid" id="Q03558"/>
<dbReference type="OMA" id="LTRCMAG"/>
<dbReference type="OrthoDB" id="276546at2759"/>
<dbReference type="BioCyc" id="MetaCyc:YHR179W-MONOMER"/>
<dbReference type="BioCyc" id="YEAST:YHR179W-MONOMER"/>
<dbReference type="BioGRID-ORCS" id="856584">
    <property type="hits" value="0 hits in 10 CRISPR screens"/>
</dbReference>
<dbReference type="PRO" id="PR:Q03558"/>
<dbReference type="Proteomes" id="UP000002311">
    <property type="component" value="Chromosome VIII"/>
</dbReference>
<dbReference type="RNAct" id="Q03558">
    <property type="molecule type" value="protein"/>
</dbReference>
<dbReference type="GO" id="GO:0005737">
    <property type="term" value="C:cytoplasm"/>
    <property type="evidence" value="ECO:0007005"/>
    <property type="project" value="SGD"/>
</dbReference>
<dbReference type="GO" id="GO:0005739">
    <property type="term" value="C:mitochondrion"/>
    <property type="evidence" value="ECO:0007005"/>
    <property type="project" value="SGD"/>
</dbReference>
<dbReference type="GO" id="GO:0005634">
    <property type="term" value="C:nucleus"/>
    <property type="evidence" value="ECO:0007005"/>
    <property type="project" value="SGD"/>
</dbReference>
<dbReference type="GO" id="GO:0010181">
    <property type="term" value="F:FMN binding"/>
    <property type="evidence" value="ECO:0007669"/>
    <property type="project" value="InterPro"/>
</dbReference>
<dbReference type="GO" id="GO:0003959">
    <property type="term" value="F:NADPH dehydrogenase activity"/>
    <property type="evidence" value="ECO:0000314"/>
    <property type="project" value="SGD"/>
</dbReference>
<dbReference type="GO" id="GO:0006915">
    <property type="term" value="P:apoptotic process"/>
    <property type="evidence" value="ECO:0000315"/>
    <property type="project" value="SGD"/>
</dbReference>
<dbReference type="CDD" id="cd02933">
    <property type="entry name" value="OYE_like_FMN"/>
    <property type="match status" value="1"/>
</dbReference>
<dbReference type="FunFam" id="3.20.20.70:FF:000138">
    <property type="entry name" value="NADPH dehydrogenase 1"/>
    <property type="match status" value="1"/>
</dbReference>
<dbReference type="Gene3D" id="3.20.20.70">
    <property type="entry name" value="Aldolase class I"/>
    <property type="match status" value="1"/>
</dbReference>
<dbReference type="InterPro" id="IPR013785">
    <property type="entry name" value="Aldolase_TIM"/>
</dbReference>
<dbReference type="InterPro" id="IPR001155">
    <property type="entry name" value="OxRdtase_FMN_N"/>
</dbReference>
<dbReference type="InterPro" id="IPR045247">
    <property type="entry name" value="Oye-like"/>
</dbReference>
<dbReference type="PANTHER" id="PTHR22893">
    <property type="entry name" value="NADH OXIDOREDUCTASE-RELATED"/>
    <property type="match status" value="1"/>
</dbReference>
<dbReference type="PANTHER" id="PTHR22893:SF91">
    <property type="entry name" value="NADPH DEHYDROGENASE 2-RELATED"/>
    <property type="match status" value="1"/>
</dbReference>
<dbReference type="Pfam" id="PF00724">
    <property type="entry name" value="Oxidored_FMN"/>
    <property type="match status" value="1"/>
</dbReference>
<dbReference type="SUPFAM" id="SSF51395">
    <property type="entry name" value="FMN-linked oxidoreductases"/>
    <property type="match status" value="1"/>
</dbReference>